<accession>Q2NCP2</accession>
<evidence type="ECO:0000255" key="1">
    <source>
        <dbReference type="HAMAP-Rule" id="MF_01844"/>
    </source>
</evidence>
<dbReference type="EMBL" id="CP000157">
    <property type="protein sequence ID" value="ABC62549.1"/>
    <property type="molecule type" value="Genomic_DNA"/>
</dbReference>
<dbReference type="RefSeq" id="WP_011413425.1">
    <property type="nucleotide sequence ID" value="NC_007722.1"/>
</dbReference>
<dbReference type="SMR" id="Q2NCP2"/>
<dbReference type="STRING" id="314225.ELI_02285"/>
<dbReference type="KEGG" id="eli:ELI_02285"/>
<dbReference type="eggNOG" id="COG3004">
    <property type="taxonomic scope" value="Bacteria"/>
</dbReference>
<dbReference type="HOGENOM" id="CLU_015803_1_0_5"/>
<dbReference type="OrthoDB" id="9808135at2"/>
<dbReference type="Proteomes" id="UP000008808">
    <property type="component" value="Chromosome"/>
</dbReference>
<dbReference type="GO" id="GO:0005886">
    <property type="term" value="C:plasma membrane"/>
    <property type="evidence" value="ECO:0007669"/>
    <property type="project" value="UniProtKB-SubCell"/>
</dbReference>
<dbReference type="GO" id="GO:0015385">
    <property type="term" value="F:sodium:proton antiporter activity"/>
    <property type="evidence" value="ECO:0007669"/>
    <property type="project" value="TreeGrafter"/>
</dbReference>
<dbReference type="GO" id="GO:0006885">
    <property type="term" value="P:regulation of pH"/>
    <property type="evidence" value="ECO:0007669"/>
    <property type="project" value="InterPro"/>
</dbReference>
<dbReference type="Gene3D" id="1.20.1530.10">
    <property type="entry name" value="Na+/H+ antiporter like domain"/>
    <property type="match status" value="1"/>
</dbReference>
<dbReference type="HAMAP" id="MF_01844">
    <property type="entry name" value="NhaA"/>
    <property type="match status" value="1"/>
</dbReference>
<dbReference type="InterPro" id="IPR023171">
    <property type="entry name" value="Na/H_antiporter_dom_sf"/>
</dbReference>
<dbReference type="InterPro" id="IPR004670">
    <property type="entry name" value="NhaA"/>
</dbReference>
<dbReference type="NCBIfam" id="TIGR00773">
    <property type="entry name" value="NhaA"/>
    <property type="match status" value="1"/>
</dbReference>
<dbReference type="NCBIfam" id="NF007111">
    <property type="entry name" value="PRK09560.1"/>
    <property type="match status" value="1"/>
</dbReference>
<dbReference type="NCBIfam" id="NF007112">
    <property type="entry name" value="PRK09561.1"/>
    <property type="match status" value="1"/>
</dbReference>
<dbReference type="PANTHER" id="PTHR30341:SF0">
    <property type="entry name" value="NA(+)_H(+) ANTIPORTER NHAA"/>
    <property type="match status" value="1"/>
</dbReference>
<dbReference type="PANTHER" id="PTHR30341">
    <property type="entry name" value="SODIUM ION/PROTON ANTIPORTER NHAA-RELATED"/>
    <property type="match status" value="1"/>
</dbReference>
<dbReference type="Pfam" id="PF06965">
    <property type="entry name" value="Na_H_antiport_1"/>
    <property type="match status" value="1"/>
</dbReference>
<proteinExistence type="inferred from homology"/>
<organism>
    <name type="scientific">Erythrobacter litoralis (strain HTCC2594)</name>
    <dbReference type="NCBI Taxonomy" id="314225"/>
    <lineage>
        <taxon>Bacteria</taxon>
        <taxon>Pseudomonadati</taxon>
        <taxon>Pseudomonadota</taxon>
        <taxon>Alphaproteobacteria</taxon>
        <taxon>Sphingomonadales</taxon>
        <taxon>Erythrobacteraceae</taxon>
        <taxon>Erythrobacter/Porphyrobacter group</taxon>
        <taxon>Erythrobacter</taxon>
    </lineage>
</organism>
<keyword id="KW-0050">Antiport</keyword>
<keyword id="KW-0997">Cell inner membrane</keyword>
<keyword id="KW-1003">Cell membrane</keyword>
<keyword id="KW-0406">Ion transport</keyword>
<keyword id="KW-0472">Membrane</keyword>
<keyword id="KW-1185">Reference proteome</keyword>
<keyword id="KW-0915">Sodium</keyword>
<keyword id="KW-0739">Sodium transport</keyword>
<keyword id="KW-0812">Transmembrane</keyword>
<keyword id="KW-1133">Transmembrane helix</keyword>
<keyword id="KW-0813">Transport</keyword>
<gene>
    <name evidence="1" type="primary">nhaA2</name>
    <name type="ordered locus">ELI_02285</name>
</gene>
<protein>
    <recommendedName>
        <fullName evidence="1">Na(+)/H(+) antiporter NhaA 2</fullName>
    </recommendedName>
    <alternativeName>
        <fullName evidence="1">Sodium/proton antiporter NhaA 2</fullName>
    </alternativeName>
</protein>
<comment type="function">
    <text evidence="1">Na(+)/H(+) antiporter that extrudes sodium in exchange for external protons.</text>
</comment>
<comment type="catalytic activity">
    <reaction evidence="1">
        <text>Na(+)(in) + 2 H(+)(out) = Na(+)(out) + 2 H(+)(in)</text>
        <dbReference type="Rhea" id="RHEA:29251"/>
        <dbReference type="ChEBI" id="CHEBI:15378"/>
        <dbReference type="ChEBI" id="CHEBI:29101"/>
    </reaction>
    <physiologicalReaction direction="left-to-right" evidence="1">
        <dbReference type="Rhea" id="RHEA:29252"/>
    </physiologicalReaction>
</comment>
<comment type="subcellular location">
    <subcellularLocation>
        <location evidence="1">Cell inner membrane</location>
        <topology evidence="1">Multi-pass membrane protein</topology>
    </subcellularLocation>
</comment>
<comment type="similarity">
    <text evidence="1">Belongs to the NhaA Na(+)/H(+) (TC 2.A.33) antiporter family.</text>
</comment>
<feature type="chain" id="PRO_0000334283" description="Na(+)/H(+) antiporter NhaA 2">
    <location>
        <begin position="1"/>
        <end position="402"/>
    </location>
</feature>
<feature type="transmembrane region" description="Helical" evidence="1">
    <location>
        <begin position="18"/>
        <end position="38"/>
    </location>
</feature>
<feature type="transmembrane region" description="Helical" evidence="1">
    <location>
        <begin position="63"/>
        <end position="83"/>
    </location>
</feature>
<feature type="transmembrane region" description="Helical" evidence="1">
    <location>
        <begin position="99"/>
        <end position="119"/>
    </location>
</feature>
<feature type="transmembrane region" description="Helical" evidence="1">
    <location>
        <begin position="129"/>
        <end position="149"/>
    </location>
</feature>
<feature type="transmembrane region" description="Helical" evidence="1">
    <location>
        <begin position="158"/>
        <end position="178"/>
    </location>
</feature>
<feature type="transmembrane region" description="Helical" evidence="1">
    <location>
        <begin position="182"/>
        <end position="202"/>
    </location>
</feature>
<feature type="transmembrane region" description="Helical" evidence="1">
    <location>
        <begin position="210"/>
        <end position="230"/>
    </location>
</feature>
<feature type="transmembrane region" description="Helical" evidence="1">
    <location>
        <begin position="258"/>
        <end position="278"/>
    </location>
</feature>
<feature type="transmembrane region" description="Helical" evidence="1">
    <location>
        <begin position="296"/>
        <end position="316"/>
    </location>
</feature>
<feature type="transmembrane region" description="Helical" evidence="1">
    <location>
        <begin position="329"/>
        <end position="349"/>
    </location>
</feature>
<feature type="transmembrane region" description="Helical" evidence="1">
    <location>
        <begin position="365"/>
        <end position="385"/>
    </location>
</feature>
<sequence>MFYTAATALRDFLKQESAGGIVLMFAAVLALIFANTALADTYFSVLATEIAVTVGGGGIEKPALLWINDGLMAVFFFLVGLEVKREVLTGQLSSWKQASLPLIAAFGGIVLPALVFYGINSGTPENLSGWAIPAATDIAFALGILALLGKRVPVALKALLLAIAVIDDIAAIAIIAIFYTPGVELAMLGAAAITLLILSAFGRAKAGSSIPYIVLGIVLWYFVLKSGVHATLAGVALAMTVPLIDRKGNHMLEHMEHALHSWVAFLVVPIFALANAGVSFEGVELSALFAPLPLGIALGLIVGKQVGIFGFAWLAVKTGFAQLPSSVGWLQVWGLSLVAGIGFTMSLFIGNLAFADPAQINAVKIGVLSGSLIAALVGIAILVLGAKAPAAKSADERVQAPA</sequence>
<reference key="1">
    <citation type="journal article" date="2009" name="J. Bacteriol.">
        <title>Complete genome sequence of Erythrobacter litoralis HTCC2594.</title>
        <authorList>
            <person name="Oh H.M."/>
            <person name="Giovannoni S.J."/>
            <person name="Ferriera S."/>
            <person name="Johnson J."/>
            <person name="Cho J.C."/>
        </authorList>
    </citation>
    <scope>NUCLEOTIDE SEQUENCE [LARGE SCALE GENOMIC DNA]</scope>
    <source>
        <strain>HTCC2594</strain>
    </source>
</reference>
<name>NHAA2_ERYLH</name>